<gene>
    <name evidence="1" type="primary">FXYD1</name>
    <name evidence="1" type="synonym">PLM</name>
</gene>
<reference evidence="9" key="1">
    <citation type="submission" date="2009-11" db="EMBL/GenBank/DDBJ databases">
        <authorList>
            <consortium name="Porcine genome sequencing project"/>
        </authorList>
    </citation>
    <scope>NUCLEOTIDE SEQUENCE [LARGE SCALE GENOMIC DNA]</scope>
    <source>
        <strain>Duroc</strain>
    </source>
</reference>
<reference evidence="8" key="2">
    <citation type="journal article" date="2005" name="Am. J. Physiol.">
        <title>Hypertrophy, increased ejection fraction, and reduced Na-K-ATPase activity in phospholemman-deficient mice.</title>
        <authorList>
            <person name="Jia L.G."/>
            <person name="Donnet C."/>
            <person name="Bogaev R.C."/>
            <person name="Blatt R.J."/>
            <person name="McKinney C.E."/>
            <person name="Day K.H."/>
            <person name="Berr S.S."/>
            <person name="Jones L.R."/>
            <person name="Moorman J.R."/>
            <person name="Sweadner K.J."/>
            <person name="Tucker A.L."/>
        </authorList>
    </citation>
    <scope>IDENTIFICATION IN SODIUM/POTASSIUM-TRANSPORTING ATPASE COMPLEX</scope>
    <scope>INTERACTION WITH ATP1A1</scope>
</reference>
<accession>I3LMB3</accession>
<feature type="signal peptide" evidence="3">
    <location>
        <begin position="1"/>
        <end position="20"/>
    </location>
</feature>
<feature type="chain" id="PRO_5003675504" description="Phospholemman">
    <location>
        <begin position="21"/>
        <end position="87"/>
    </location>
</feature>
<feature type="topological domain" description="Extracellular" evidence="6">
    <location>
        <begin position="21"/>
        <end position="35"/>
    </location>
</feature>
<feature type="transmembrane region" description="Helical" evidence="6">
    <location>
        <begin position="36"/>
        <end position="56"/>
    </location>
</feature>
<feature type="topological domain" description="Cytoplasmic" evidence="6">
    <location>
        <begin position="57"/>
        <end position="87"/>
    </location>
</feature>
<feature type="modified residue" description="S-glutathionyl cysteine; alternate" evidence="3">
    <location>
        <position position="62"/>
    </location>
</feature>
<feature type="modified residue" description="Phosphoserine; by PKA and PKC" evidence="5">
    <location>
        <position position="75"/>
    </location>
</feature>
<feature type="modified residue" description="Phosphoserine; by PKA" evidence="3">
    <location>
        <position position="83"/>
    </location>
</feature>
<feature type="lipid moiety-binding region" description="S-palmitoyl cysteine" evidence="1">
    <location>
        <position position="60"/>
    </location>
</feature>
<feature type="lipid moiety-binding region" description="S-palmitoyl cysteine; alternate" evidence="1">
    <location>
        <position position="62"/>
    </location>
</feature>
<evidence type="ECO:0000250" key="1">
    <source>
        <dbReference type="UniProtKB" id="O00168"/>
    </source>
</evidence>
<evidence type="ECO:0000250" key="2">
    <source>
        <dbReference type="UniProtKB" id="O08589"/>
    </source>
</evidence>
<evidence type="ECO:0000250" key="3">
    <source>
        <dbReference type="UniProtKB" id="P56513"/>
    </source>
</evidence>
<evidence type="ECO:0000250" key="4">
    <source>
        <dbReference type="UniProtKB" id="Q3SZX0"/>
    </source>
</evidence>
<evidence type="ECO:0000250" key="5">
    <source>
        <dbReference type="UniProtKB" id="Q9Z239"/>
    </source>
</evidence>
<evidence type="ECO:0000255" key="6"/>
<evidence type="ECO:0000269" key="7">
    <source>
    </source>
</evidence>
<evidence type="ECO:0000305" key="8"/>
<evidence type="ECO:0000312" key="9">
    <source>
        <dbReference type="Proteomes" id="UP000008227"/>
    </source>
</evidence>
<sequence length="87" mass="9672">MASLSHILVLWVGILTVVNAEAPQEHDPFTYDYQSLRIGGLIIAGILFILGILIVLSRRCRCKFNQQQSLGKMRSPHLAAQFSSESC</sequence>
<comment type="function">
    <text evidence="2 3 5">Associates with and regulates the activity of the sodium/potassium-transporting ATPase (NKA) which transports Na(+) out of the cell and K(+) into the cell. Inhibits NKA activity in its unphosphorylated state and stimulates activity when phosphorylated. Reduces glutathionylation of the NKA beta-1 subunit ATP1B1, thus reversing glutathionylation-mediated inhibition of ATP1B1. Contributes to female sexual development by maintaining the excitability of neurons which secrete gonadotropin-releasing hormone.</text>
</comment>
<comment type="subunit">
    <text evidence="1 2 3 4 5 7">Homotetramer (By similarity). Monomer (By similarity). Regulatory subunit of the sodium/potassium-transporting ATPase (NKA) which is composed of a catalytic alpha subunit, a non-catalytic beta subunit and an additional regulatory subunit (PubMed:15563542). The monomeric form associates with NKA while the oligomeric form does not (By similarity). Interacts with the catalytic alpha-1 subunit ATP1A1 (PubMed:15563542). Also interacts with the catalytic alpha-2 and alpha-3 subunits ATP1A2 and ATP1A3 (By similarity). Very little interaction with ATP1A1, ATP1A2 or ATP1A3 when phosphorylated at Ser-83 (By similarity). Interacts with the non-catalytic beta-1 subunit ATP1B1 (By similarity). Oxidative stress decreases interaction with ATP1A1 but increases interaction with ATP1B1 (By similarity).</text>
</comment>
<comment type="subcellular location">
    <subcellularLocation>
        <location evidence="3">Cell membrane</location>
        <location evidence="3">Sarcolemma</location>
        <topology evidence="6">Single-pass type I membrane protein</topology>
    </subcellularLocation>
    <subcellularLocation>
        <location evidence="2">Apical cell membrane</location>
        <topology evidence="6">Single-pass type I membrane protein</topology>
    </subcellularLocation>
    <subcellularLocation>
        <location evidence="2">Membrane</location>
        <location evidence="2">Caveola</location>
    </subcellularLocation>
    <subcellularLocation>
        <location evidence="2">Cell membrane</location>
        <location evidence="2">Sarcolemma</location>
        <location evidence="2">T-tubule</location>
    </subcellularLocation>
    <text evidence="2">Detected in the apical cell membrane in brain. In myocytes, localizes to sarcolemma, t-tubules and intercalated disks.</text>
</comment>
<comment type="domain">
    <text evidence="2">The cytoplasmic domain is sufficient to regulate sodium/potassium-transporting ATPase activity.</text>
</comment>
<comment type="PTM">
    <text evidence="1 2 3">Major plasma membrane substrate for cAMP-dependent protein kinase (PKA) and protein kinase C (PKC) in several different tissues. Phosphorylated in response to insulin and adrenergic stimulation. Phosphorylation at Ser-83 stimulates sodium/potassium-transporting ATPase activity while the unphosphorylated form inhibits sodium/potassium-transporting ATPase activity. Phosphorylation increases tetramerization, decreases binding to ATP1A1 and reduces inhibition of ATP1A1 activity. Phosphorylation at Ser-75 leads to greatly reduced interaction with ATP1A1, ATP1A2 and ATP1A3. May be phosphorylated by DMPK.</text>
</comment>
<comment type="PTM">
    <text evidence="1">Palmitoylation increases half-life and stability and is enhanced upon phosphorylation at Ser-83 by PKA.</text>
</comment>
<comment type="similarity">
    <text evidence="8">Belongs to the FXYD family.</text>
</comment>
<name>PLM_PIG</name>
<protein>
    <recommendedName>
        <fullName evidence="3">Phospholemman</fullName>
    </recommendedName>
    <alternativeName>
        <fullName evidence="1">FXYD domain-containing ion transport regulator 1</fullName>
    </alternativeName>
    <alternativeName>
        <fullName evidence="8">Sodium/potassium-transporting ATPase subunit FXYD1</fullName>
    </alternativeName>
</protein>
<dbReference type="EMBL" id="FP565327">
    <property type="status" value="NOT_ANNOTATED_CDS"/>
    <property type="molecule type" value="Genomic_DNA"/>
</dbReference>
<dbReference type="SMR" id="I3LMB3"/>
<dbReference type="FunCoup" id="I3LMB3">
    <property type="interactions" value="189"/>
</dbReference>
<dbReference type="STRING" id="9823.ENSSSCP00000060687"/>
<dbReference type="PaxDb" id="9823-ENSSSCP00000025234"/>
<dbReference type="PeptideAtlas" id="I3LMB3"/>
<dbReference type="Ensembl" id="ENSSSCT00000076450.2">
    <property type="protein sequence ID" value="ENSSSCP00000072479.1"/>
    <property type="gene ID" value="ENSSSCG00000021374.4"/>
</dbReference>
<dbReference type="Ensembl" id="ENSSSCT00015038812.1">
    <property type="protein sequence ID" value="ENSSSCP00015015419.1"/>
    <property type="gene ID" value="ENSSSCG00015028298.1"/>
</dbReference>
<dbReference type="Ensembl" id="ENSSSCT00025041671.1">
    <property type="protein sequence ID" value="ENSSSCP00025017735.1"/>
    <property type="gene ID" value="ENSSSCG00025030566.1"/>
</dbReference>
<dbReference type="Ensembl" id="ENSSSCT00030028686.1">
    <property type="protein sequence ID" value="ENSSSCP00030012808.1"/>
    <property type="gene ID" value="ENSSSCG00030020741.1"/>
</dbReference>
<dbReference type="Ensembl" id="ENSSSCT00035028330.1">
    <property type="protein sequence ID" value="ENSSSCP00035010911.1"/>
    <property type="gene ID" value="ENSSSCG00035021670.1"/>
</dbReference>
<dbReference type="Ensembl" id="ENSSSCT00040094677.1">
    <property type="protein sequence ID" value="ENSSSCP00040041835.1"/>
    <property type="gene ID" value="ENSSSCG00040068829.1"/>
</dbReference>
<dbReference type="Ensembl" id="ENSSSCT00045059949.1">
    <property type="protein sequence ID" value="ENSSSCP00045042083.1"/>
    <property type="gene ID" value="ENSSSCG00045034732.1"/>
</dbReference>
<dbReference type="Ensembl" id="ENSSSCT00050008215.1">
    <property type="protein sequence ID" value="ENSSSCP00050003502.1"/>
    <property type="gene ID" value="ENSSSCG00050006033.1"/>
</dbReference>
<dbReference type="Ensembl" id="ENSSSCT00055059231.1">
    <property type="protein sequence ID" value="ENSSSCP00055047435.1"/>
    <property type="gene ID" value="ENSSSCG00055029735.1"/>
</dbReference>
<dbReference type="Ensembl" id="ENSSSCT00060074058.1">
    <property type="protein sequence ID" value="ENSSSCP00060031938.1"/>
    <property type="gene ID" value="ENSSSCG00060054384.1"/>
</dbReference>
<dbReference type="Ensembl" id="ENSSSCT00065071044.1">
    <property type="protein sequence ID" value="ENSSSCP00065030965.1"/>
    <property type="gene ID" value="ENSSSCG00065051846.1"/>
</dbReference>
<dbReference type="Ensembl" id="ENSSSCT00070020418.1">
    <property type="protein sequence ID" value="ENSSSCP00070016965.1"/>
    <property type="gene ID" value="ENSSSCG00070010455.1"/>
</dbReference>
<dbReference type="Ensembl" id="ENSSSCT00105048374">
    <property type="protein sequence ID" value="ENSSSCP00105033935"/>
    <property type="gene ID" value="ENSSSCG00105025483"/>
</dbReference>
<dbReference type="Ensembl" id="ENSSSCT00110067292">
    <property type="protein sequence ID" value="ENSSSCP00110047505"/>
    <property type="gene ID" value="ENSSSCG00110035357"/>
</dbReference>
<dbReference type="Ensembl" id="ENSSSCT00115013914">
    <property type="protein sequence ID" value="ENSSSCP00115013156"/>
    <property type="gene ID" value="ENSSSCG00115007944"/>
</dbReference>
<dbReference type="Ensembl" id="ENSSSCT00130043517">
    <property type="protein sequence ID" value="ENSSSCP00130030627"/>
    <property type="gene ID" value="ENSSSCG00130022501"/>
</dbReference>
<dbReference type="eggNOG" id="ENOG502S5XM">
    <property type="taxonomic scope" value="Eukaryota"/>
</dbReference>
<dbReference type="GeneTree" id="ENSGT00990000209743"/>
<dbReference type="HOGENOM" id="CLU_171208_0_1_1"/>
<dbReference type="InParanoid" id="I3LMB3"/>
<dbReference type="TreeFam" id="TF333443"/>
<dbReference type="Reactome" id="R-SSC-5578775">
    <property type="pathway name" value="Ion homeostasis"/>
</dbReference>
<dbReference type="Reactome" id="R-SSC-936837">
    <property type="pathway name" value="Ion transport by P-type ATPases"/>
</dbReference>
<dbReference type="Proteomes" id="UP000008227">
    <property type="component" value="Chromosome 6"/>
</dbReference>
<dbReference type="Proteomes" id="UP000314985">
    <property type="component" value="Chromosome 6"/>
</dbReference>
<dbReference type="Proteomes" id="UP000694570">
    <property type="component" value="Unplaced"/>
</dbReference>
<dbReference type="Proteomes" id="UP000694571">
    <property type="component" value="Unplaced"/>
</dbReference>
<dbReference type="Proteomes" id="UP000694720">
    <property type="component" value="Unplaced"/>
</dbReference>
<dbReference type="Proteomes" id="UP000694722">
    <property type="component" value="Unplaced"/>
</dbReference>
<dbReference type="Proteomes" id="UP000694723">
    <property type="component" value="Unplaced"/>
</dbReference>
<dbReference type="Proteomes" id="UP000694724">
    <property type="component" value="Unplaced"/>
</dbReference>
<dbReference type="Proteomes" id="UP000694725">
    <property type="component" value="Unplaced"/>
</dbReference>
<dbReference type="Proteomes" id="UP000694726">
    <property type="component" value="Unplaced"/>
</dbReference>
<dbReference type="Proteomes" id="UP000694727">
    <property type="component" value="Unplaced"/>
</dbReference>
<dbReference type="Proteomes" id="UP000694728">
    <property type="component" value="Unplaced"/>
</dbReference>
<dbReference type="Bgee" id="ENSSSCG00000021374">
    <property type="expression patterns" value="Expressed in longissimus lumborum muscle and 45 other cell types or tissues"/>
</dbReference>
<dbReference type="ExpressionAtlas" id="I3LMB3">
    <property type="expression patterns" value="baseline and differential"/>
</dbReference>
<dbReference type="GO" id="GO:0016324">
    <property type="term" value="C:apical plasma membrane"/>
    <property type="evidence" value="ECO:0000250"/>
    <property type="project" value="UniProtKB"/>
</dbReference>
<dbReference type="GO" id="GO:0005901">
    <property type="term" value="C:caveola"/>
    <property type="evidence" value="ECO:0000250"/>
    <property type="project" value="UniProtKB"/>
</dbReference>
<dbReference type="GO" id="GO:0014704">
    <property type="term" value="C:intercalated disc"/>
    <property type="evidence" value="ECO:0000250"/>
    <property type="project" value="UniProtKB"/>
</dbReference>
<dbReference type="GO" id="GO:0042383">
    <property type="term" value="C:sarcolemma"/>
    <property type="evidence" value="ECO:0000315"/>
    <property type="project" value="BHF-UCL"/>
</dbReference>
<dbReference type="GO" id="GO:0005890">
    <property type="term" value="C:sodium:potassium-exchanging ATPase complex"/>
    <property type="evidence" value="ECO:0000314"/>
    <property type="project" value="BHF-UCL"/>
</dbReference>
<dbReference type="GO" id="GO:0030315">
    <property type="term" value="C:T-tubule"/>
    <property type="evidence" value="ECO:0000250"/>
    <property type="project" value="UniProtKB"/>
</dbReference>
<dbReference type="GO" id="GO:0017080">
    <property type="term" value="F:sodium channel regulator activity"/>
    <property type="evidence" value="ECO:0000318"/>
    <property type="project" value="GO_Central"/>
</dbReference>
<dbReference type="GO" id="GO:0044325">
    <property type="term" value="F:transmembrane transporter binding"/>
    <property type="evidence" value="ECO:0000353"/>
    <property type="project" value="BHF-UCL"/>
</dbReference>
<dbReference type="GO" id="GO:0010734">
    <property type="term" value="P:negative regulation of protein glutathionylation"/>
    <property type="evidence" value="ECO:0000250"/>
    <property type="project" value="UniProtKB"/>
</dbReference>
<dbReference type="GO" id="GO:1903278">
    <property type="term" value="P:positive regulation of sodium ion export across plasma membrane"/>
    <property type="evidence" value="ECO:0000250"/>
    <property type="project" value="UniProtKB"/>
</dbReference>
<dbReference type="GO" id="GO:0006813">
    <property type="term" value="P:potassium ion transport"/>
    <property type="evidence" value="ECO:0007669"/>
    <property type="project" value="UniProtKB-KW"/>
</dbReference>
<dbReference type="GO" id="GO:0006814">
    <property type="term" value="P:sodium ion transport"/>
    <property type="evidence" value="ECO:0007669"/>
    <property type="project" value="UniProtKB-KW"/>
</dbReference>
<dbReference type="CDD" id="cd20317">
    <property type="entry name" value="FXYD1"/>
    <property type="match status" value="1"/>
</dbReference>
<dbReference type="FunFam" id="1.20.5.780:FF:000002">
    <property type="entry name" value="FXYD domain-containing ion transport regulator"/>
    <property type="match status" value="1"/>
</dbReference>
<dbReference type="Gene3D" id="1.20.5.780">
    <property type="entry name" value="Single helix bin"/>
    <property type="match status" value="1"/>
</dbReference>
<dbReference type="InterPro" id="IPR047297">
    <property type="entry name" value="FXYD_motif"/>
</dbReference>
<dbReference type="InterPro" id="IPR000272">
    <property type="entry name" value="Ion-transport_regulator_FXYD"/>
</dbReference>
<dbReference type="InterPro" id="IPR047281">
    <property type="entry name" value="PLM"/>
</dbReference>
<dbReference type="PANTHER" id="PTHR14132:SF12">
    <property type="entry name" value="PHOSPHOLEMMAN"/>
    <property type="match status" value="1"/>
</dbReference>
<dbReference type="PANTHER" id="PTHR14132">
    <property type="entry name" value="SODIUM/POTASSIUM-TRANSPORTING ATPASE SUBUNIT GAMMA"/>
    <property type="match status" value="1"/>
</dbReference>
<dbReference type="Pfam" id="PF02038">
    <property type="entry name" value="ATP1G1_PLM_MAT8"/>
    <property type="match status" value="1"/>
</dbReference>
<dbReference type="PROSITE" id="PS01310">
    <property type="entry name" value="FXYD"/>
    <property type="match status" value="1"/>
</dbReference>
<keyword id="KW-1003">Cell membrane</keyword>
<keyword id="KW-0318">Glutathionylation</keyword>
<keyword id="KW-0406">Ion transport</keyword>
<keyword id="KW-0449">Lipoprotein</keyword>
<keyword id="KW-0472">Membrane</keyword>
<keyword id="KW-0564">Palmitate</keyword>
<keyword id="KW-0597">Phosphoprotein</keyword>
<keyword id="KW-0630">Potassium</keyword>
<keyword id="KW-0633">Potassium transport</keyword>
<keyword id="KW-1185">Reference proteome</keyword>
<keyword id="KW-0732">Signal</keyword>
<keyword id="KW-0915">Sodium</keyword>
<keyword id="KW-0739">Sodium transport</keyword>
<keyword id="KW-0740">Sodium/potassium transport</keyword>
<keyword id="KW-0812">Transmembrane</keyword>
<keyword id="KW-1133">Transmembrane helix</keyword>
<keyword id="KW-0813">Transport</keyword>
<proteinExistence type="evidence at protein level"/>
<organism evidence="9">
    <name type="scientific">Sus scrofa</name>
    <name type="common">Pig</name>
    <dbReference type="NCBI Taxonomy" id="9823"/>
    <lineage>
        <taxon>Eukaryota</taxon>
        <taxon>Metazoa</taxon>
        <taxon>Chordata</taxon>
        <taxon>Craniata</taxon>
        <taxon>Vertebrata</taxon>
        <taxon>Euteleostomi</taxon>
        <taxon>Mammalia</taxon>
        <taxon>Eutheria</taxon>
        <taxon>Laurasiatheria</taxon>
        <taxon>Artiodactyla</taxon>
        <taxon>Suina</taxon>
        <taxon>Suidae</taxon>
        <taxon>Sus</taxon>
    </lineage>
</organism>